<proteinExistence type="inferred from homology"/>
<name>DPPC_ECOL6</name>
<reference key="1">
    <citation type="journal article" date="2002" name="Proc. Natl. Acad. Sci. U.S.A.">
        <title>Extensive mosaic structure revealed by the complete genome sequence of uropathogenic Escherichia coli.</title>
        <authorList>
            <person name="Welch R.A."/>
            <person name="Burland V."/>
            <person name="Plunkett G. III"/>
            <person name="Redford P."/>
            <person name="Roesch P."/>
            <person name="Rasko D."/>
            <person name="Buckles E.L."/>
            <person name="Liou S.-R."/>
            <person name="Boutin A."/>
            <person name="Hackett J."/>
            <person name="Stroud D."/>
            <person name="Mayhew G.F."/>
            <person name="Rose D.J."/>
            <person name="Zhou S."/>
            <person name="Schwartz D.C."/>
            <person name="Perna N.T."/>
            <person name="Mobley H.L.T."/>
            <person name="Donnenberg M.S."/>
            <person name="Blattner F.R."/>
        </authorList>
    </citation>
    <scope>NUCLEOTIDE SEQUENCE [LARGE SCALE GENOMIC DNA]</scope>
    <source>
        <strain>CFT073 / ATCC 700928 / UPEC</strain>
    </source>
</reference>
<organism>
    <name type="scientific">Escherichia coli O6:H1 (strain CFT073 / ATCC 700928 / UPEC)</name>
    <dbReference type="NCBI Taxonomy" id="199310"/>
    <lineage>
        <taxon>Bacteria</taxon>
        <taxon>Pseudomonadati</taxon>
        <taxon>Pseudomonadota</taxon>
        <taxon>Gammaproteobacteria</taxon>
        <taxon>Enterobacterales</taxon>
        <taxon>Enterobacteriaceae</taxon>
        <taxon>Escherichia</taxon>
    </lineage>
</organism>
<gene>
    <name type="primary">dppC</name>
    <name type="ordered locus">c4357</name>
</gene>
<keyword id="KW-0997">Cell inner membrane</keyword>
<keyword id="KW-1003">Cell membrane</keyword>
<keyword id="KW-0472">Membrane</keyword>
<keyword id="KW-0571">Peptide transport</keyword>
<keyword id="KW-0653">Protein transport</keyword>
<keyword id="KW-1185">Reference proteome</keyword>
<keyword id="KW-0812">Transmembrane</keyword>
<keyword id="KW-1133">Transmembrane helix</keyword>
<keyword id="KW-0813">Transport</keyword>
<evidence type="ECO:0000250" key="1">
    <source>
        <dbReference type="UniProtKB" id="P0AEG1"/>
    </source>
</evidence>
<evidence type="ECO:0000255" key="2"/>
<evidence type="ECO:0000255" key="3">
    <source>
        <dbReference type="PROSITE-ProRule" id="PRU00441"/>
    </source>
</evidence>
<evidence type="ECO:0000305" key="4"/>
<comment type="function">
    <text evidence="1">Part of the ABC transporter DppABCDF involved in dipeptide transport. Responsible for the translocation of the substrate across the membrane.</text>
</comment>
<comment type="subunit">
    <text evidence="1">The complex is composed of two ATP-binding proteins (DppD and DppF), two transmembrane proteins (DppB and DppC) and a solute-binding protein (DppA).</text>
</comment>
<comment type="subcellular location">
    <subcellularLocation>
        <location evidence="1">Cell inner membrane</location>
        <topology evidence="2">Multi-pass membrane protein</topology>
    </subcellularLocation>
</comment>
<comment type="similarity">
    <text evidence="4">Belongs to the binding-protein-dependent transport system permease family. OppBC subfamily.</text>
</comment>
<accession>P0AEG2</accession>
<accession>P37315</accession>
<sequence length="300" mass="32308">MSQVTENKVISAPVPMTPLQEFWHYFKRNKGAVVGLVYVVIVLFIAIFANWIAPYNPAEQFRDALLAPPAWQEGGSMAHLLGTDDVGRDVLSRLMYGARLSLLVGCLVVVLSLIMGVILGLIAGYFGGLVDNIIMRVVDIMLALPSLLLALVLVAIFGPSIGNAALALTFVALPHYVRLTRAAVLVEVNRDYVTASRVAGAGAMRQMFINIFPNCLAPLIVQASLGFSNAILDMAALGFLGMGAQPPTPEWGTMLSDVLQFAQSAWWVVTFPGLAILLTVLAFNLMGDGLRDALDPKLKQ</sequence>
<protein>
    <recommendedName>
        <fullName evidence="1">Dipeptide transport system permease protein DppC</fullName>
    </recommendedName>
</protein>
<dbReference type="EMBL" id="AE014075">
    <property type="protein sequence ID" value="AAN82793.1"/>
    <property type="molecule type" value="Genomic_DNA"/>
</dbReference>
<dbReference type="RefSeq" id="WP_000084677.1">
    <property type="nucleotide sequence ID" value="NZ_CP051263.1"/>
</dbReference>
<dbReference type="SMR" id="P0AEG2"/>
<dbReference type="STRING" id="199310.c4357"/>
<dbReference type="GeneID" id="75201991"/>
<dbReference type="KEGG" id="ecc:c4357"/>
<dbReference type="eggNOG" id="COG1173">
    <property type="taxonomic scope" value="Bacteria"/>
</dbReference>
<dbReference type="HOGENOM" id="CLU_028518_1_1_6"/>
<dbReference type="BioCyc" id="ECOL199310:C4357-MONOMER"/>
<dbReference type="Proteomes" id="UP000001410">
    <property type="component" value="Chromosome"/>
</dbReference>
<dbReference type="GO" id="GO:0005886">
    <property type="term" value="C:plasma membrane"/>
    <property type="evidence" value="ECO:0007669"/>
    <property type="project" value="UniProtKB-SubCell"/>
</dbReference>
<dbReference type="GO" id="GO:0071916">
    <property type="term" value="F:dipeptide transmembrane transporter activity"/>
    <property type="evidence" value="ECO:0007669"/>
    <property type="project" value="TreeGrafter"/>
</dbReference>
<dbReference type="GO" id="GO:0015031">
    <property type="term" value="P:protein transport"/>
    <property type="evidence" value="ECO:0007669"/>
    <property type="project" value="UniProtKB-KW"/>
</dbReference>
<dbReference type="CDD" id="cd06261">
    <property type="entry name" value="TM_PBP2"/>
    <property type="match status" value="1"/>
</dbReference>
<dbReference type="FunFam" id="1.10.3720.10:FF:000007">
    <property type="entry name" value="Dipeptide ABC transporter permease DppC"/>
    <property type="match status" value="1"/>
</dbReference>
<dbReference type="Gene3D" id="1.10.3720.10">
    <property type="entry name" value="MetI-like"/>
    <property type="match status" value="1"/>
</dbReference>
<dbReference type="InterPro" id="IPR050366">
    <property type="entry name" value="BP-dependent_transpt_permease"/>
</dbReference>
<dbReference type="InterPro" id="IPR000515">
    <property type="entry name" value="MetI-like"/>
</dbReference>
<dbReference type="InterPro" id="IPR035906">
    <property type="entry name" value="MetI-like_sf"/>
</dbReference>
<dbReference type="InterPro" id="IPR025966">
    <property type="entry name" value="OppC_N"/>
</dbReference>
<dbReference type="NCBIfam" id="NF008160">
    <property type="entry name" value="PRK10913.1"/>
    <property type="match status" value="1"/>
</dbReference>
<dbReference type="PANTHER" id="PTHR43386:SF1">
    <property type="entry name" value="D,D-DIPEPTIDE TRANSPORT SYSTEM PERMEASE PROTEIN DDPC-RELATED"/>
    <property type="match status" value="1"/>
</dbReference>
<dbReference type="PANTHER" id="PTHR43386">
    <property type="entry name" value="OLIGOPEPTIDE TRANSPORT SYSTEM PERMEASE PROTEIN APPC"/>
    <property type="match status" value="1"/>
</dbReference>
<dbReference type="Pfam" id="PF00528">
    <property type="entry name" value="BPD_transp_1"/>
    <property type="match status" value="1"/>
</dbReference>
<dbReference type="Pfam" id="PF12911">
    <property type="entry name" value="OppC_N"/>
    <property type="match status" value="1"/>
</dbReference>
<dbReference type="SUPFAM" id="SSF161098">
    <property type="entry name" value="MetI-like"/>
    <property type="match status" value="1"/>
</dbReference>
<dbReference type="PROSITE" id="PS50928">
    <property type="entry name" value="ABC_TM1"/>
    <property type="match status" value="1"/>
</dbReference>
<feature type="chain" id="PRO_0000060011" description="Dipeptide transport system permease protein DppC">
    <location>
        <begin position="1"/>
        <end position="300"/>
    </location>
</feature>
<feature type="topological domain" description="Cytoplasmic" evidence="2">
    <location>
        <begin position="1"/>
        <end position="31"/>
    </location>
</feature>
<feature type="transmembrane region" description="Helical" evidence="3">
    <location>
        <begin position="32"/>
        <end position="52"/>
    </location>
</feature>
<feature type="topological domain" description="Periplasmic" evidence="2">
    <location>
        <begin position="53"/>
        <end position="101"/>
    </location>
</feature>
<feature type="transmembrane region" description="Helical" evidence="3">
    <location>
        <begin position="102"/>
        <end position="122"/>
    </location>
</feature>
<feature type="topological domain" description="Cytoplasmic" evidence="2">
    <location>
        <begin position="123"/>
        <end position="136"/>
    </location>
</feature>
<feature type="transmembrane region" description="Helical" evidence="3">
    <location>
        <begin position="137"/>
        <end position="157"/>
    </location>
</feature>
<feature type="topological domain" description="Periplasmic" evidence="2">
    <location>
        <begin position="158"/>
        <end position="206"/>
    </location>
</feature>
<feature type="transmembrane region" description="Helical" evidence="3">
    <location>
        <begin position="207"/>
        <end position="227"/>
    </location>
</feature>
<feature type="topological domain" description="Cytoplasmic" evidence="2">
    <location>
        <begin position="228"/>
        <end position="230"/>
    </location>
</feature>
<feature type="transmembrane region" description="Helical" evidence="3">
    <location>
        <begin position="231"/>
        <end position="251"/>
    </location>
</feature>
<feature type="topological domain" description="Periplasmic" evidence="2">
    <location>
        <begin position="252"/>
        <end position="265"/>
    </location>
</feature>
<feature type="transmembrane region" description="Helical" evidence="3">
    <location>
        <begin position="266"/>
        <end position="286"/>
    </location>
</feature>
<feature type="topological domain" description="Cytoplasmic" evidence="2">
    <location>
        <begin position="287"/>
        <end position="300"/>
    </location>
</feature>
<feature type="domain" description="ABC transmembrane type-1" evidence="3">
    <location>
        <begin position="98"/>
        <end position="287"/>
    </location>
</feature>